<name>PNP_OPITP</name>
<evidence type="ECO:0000255" key="1">
    <source>
        <dbReference type="HAMAP-Rule" id="MF_01595"/>
    </source>
</evidence>
<organism>
    <name type="scientific">Opitutus terrae (strain DSM 11246 / JCM 15787 / PB90-1)</name>
    <dbReference type="NCBI Taxonomy" id="452637"/>
    <lineage>
        <taxon>Bacteria</taxon>
        <taxon>Pseudomonadati</taxon>
        <taxon>Verrucomicrobiota</taxon>
        <taxon>Opitutia</taxon>
        <taxon>Opitutales</taxon>
        <taxon>Opitutaceae</taxon>
        <taxon>Opitutus</taxon>
    </lineage>
</organism>
<feature type="chain" id="PRO_0000381908" description="Polyribonucleotide nucleotidyltransferase">
    <location>
        <begin position="1"/>
        <end position="730"/>
    </location>
</feature>
<feature type="domain" description="KH" evidence="1">
    <location>
        <begin position="561"/>
        <end position="622"/>
    </location>
</feature>
<feature type="domain" description="S1 motif" evidence="1">
    <location>
        <begin position="642"/>
        <end position="711"/>
    </location>
</feature>
<feature type="binding site" evidence="1">
    <location>
        <position position="494"/>
    </location>
    <ligand>
        <name>Mg(2+)</name>
        <dbReference type="ChEBI" id="CHEBI:18420"/>
    </ligand>
</feature>
<feature type="binding site" evidence="1">
    <location>
        <position position="500"/>
    </location>
    <ligand>
        <name>Mg(2+)</name>
        <dbReference type="ChEBI" id="CHEBI:18420"/>
    </ligand>
</feature>
<gene>
    <name evidence="1" type="primary">pnp</name>
    <name type="ordered locus">Oter_2415</name>
</gene>
<reference key="1">
    <citation type="journal article" date="2011" name="J. Bacteriol.">
        <title>Genome sequence of the verrucomicrobium Opitutus terrae PB90-1, an abundant inhabitant of rice paddy soil ecosystems.</title>
        <authorList>
            <person name="van Passel M.W."/>
            <person name="Kant R."/>
            <person name="Palva A."/>
            <person name="Copeland A."/>
            <person name="Lucas S."/>
            <person name="Lapidus A."/>
            <person name="Glavina del Rio T."/>
            <person name="Pitluck S."/>
            <person name="Goltsman E."/>
            <person name="Clum A."/>
            <person name="Sun H."/>
            <person name="Schmutz J."/>
            <person name="Larimer F.W."/>
            <person name="Land M.L."/>
            <person name="Hauser L."/>
            <person name="Kyrpides N."/>
            <person name="Mikhailova N."/>
            <person name="Richardson P.P."/>
            <person name="Janssen P.H."/>
            <person name="de Vos W.M."/>
            <person name="Smidt H."/>
        </authorList>
    </citation>
    <scope>NUCLEOTIDE SEQUENCE [LARGE SCALE GENOMIC DNA]</scope>
    <source>
        <strain>DSM 11246 / JCM 15787 / PB90-1</strain>
    </source>
</reference>
<keyword id="KW-0963">Cytoplasm</keyword>
<keyword id="KW-0460">Magnesium</keyword>
<keyword id="KW-0479">Metal-binding</keyword>
<keyword id="KW-0548">Nucleotidyltransferase</keyword>
<keyword id="KW-1185">Reference proteome</keyword>
<keyword id="KW-0694">RNA-binding</keyword>
<keyword id="KW-0808">Transferase</keyword>
<dbReference type="EC" id="2.7.7.8" evidence="1"/>
<dbReference type="EMBL" id="CP001032">
    <property type="protein sequence ID" value="ACB75697.1"/>
    <property type="molecule type" value="Genomic_DNA"/>
</dbReference>
<dbReference type="RefSeq" id="WP_012375233.1">
    <property type="nucleotide sequence ID" value="NC_010571.1"/>
</dbReference>
<dbReference type="SMR" id="B1ZS98"/>
<dbReference type="STRING" id="452637.Oter_2415"/>
<dbReference type="KEGG" id="ote:Oter_2415"/>
<dbReference type="eggNOG" id="COG1185">
    <property type="taxonomic scope" value="Bacteria"/>
</dbReference>
<dbReference type="HOGENOM" id="CLU_004217_2_2_0"/>
<dbReference type="OrthoDB" id="9804305at2"/>
<dbReference type="Proteomes" id="UP000007013">
    <property type="component" value="Chromosome"/>
</dbReference>
<dbReference type="GO" id="GO:0005829">
    <property type="term" value="C:cytosol"/>
    <property type="evidence" value="ECO:0007669"/>
    <property type="project" value="TreeGrafter"/>
</dbReference>
<dbReference type="GO" id="GO:0000175">
    <property type="term" value="F:3'-5'-RNA exonuclease activity"/>
    <property type="evidence" value="ECO:0007669"/>
    <property type="project" value="TreeGrafter"/>
</dbReference>
<dbReference type="GO" id="GO:0000287">
    <property type="term" value="F:magnesium ion binding"/>
    <property type="evidence" value="ECO:0007669"/>
    <property type="project" value="UniProtKB-UniRule"/>
</dbReference>
<dbReference type="GO" id="GO:0004654">
    <property type="term" value="F:polyribonucleotide nucleotidyltransferase activity"/>
    <property type="evidence" value="ECO:0007669"/>
    <property type="project" value="UniProtKB-UniRule"/>
</dbReference>
<dbReference type="GO" id="GO:0003723">
    <property type="term" value="F:RNA binding"/>
    <property type="evidence" value="ECO:0007669"/>
    <property type="project" value="UniProtKB-UniRule"/>
</dbReference>
<dbReference type="GO" id="GO:0006402">
    <property type="term" value="P:mRNA catabolic process"/>
    <property type="evidence" value="ECO:0007669"/>
    <property type="project" value="UniProtKB-UniRule"/>
</dbReference>
<dbReference type="GO" id="GO:0006396">
    <property type="term" value="P:RNA processing"/>
    <property type="evidence" value="ECO:0007669"/>
    <property type="project" value="InterPro"/>
</dbReference>
<dbReference type="CDD" id="cd02393">
    <property type="entry name" value="KH-I_PNPase"/>
    <property type="match status" value="1"/>
</dbReference>
<dbReference type="CDD" id="cd11363">
    <property type="entry name" value="RNase_PH_PNPase_1"/>
    <property type="match status" value="1"/>
</dbReference>
<dbReference type="CDD" id="cd11364">
    <property type="entry name" value="RNase_PH_PNPase_2"/>
    <property type="match status" value="1"/>
</dbReference>
<dbReference type="CDD" id="cd04472">
    <property type="entry name" value="S1_PNPase"/>
    <property type="match status" value="1"/>
</dbReference>
<dbReference type="FunFam" id="3.30.1370.10:FF:000001">
    <property type="entry name" value="Polyribonucleotide nucleotidyltransferase"/>
    <property type="match status" value="1"/>
</dbReference>
<dbReference type="FunFam" id="3.30.230.70:FF:000001">
    <property type="entry name" value="Polyribonucleotide nucleotidyltransferase"/>
    <property type="match status" value="1"/>
</dbReference>
<dbReference type="FunFam" id="2.40.50.140:FF:000189">
    <property type="entry name" value="Polyribonucleotide nucleotidyltransferase, putative"/>
    <property type="match status" value="1"/>
</dbReference>
<dbReference type="Gene3D" id="3.30.230.70">
    <property type="entry name" value="GHMP Kinase, N-terminal domain"/>
    <property type="match status" value="2"/>
</dbReference>
<dbReference type="Gene3D" id="3.30.1370.10">
    <property type="entry name" value="K Homology domain, type 1"/>
    <property type="match status" value="1"/>
</dbReference>
<dbReference type="Gene3D" id="2.40.50.140">
    <property type="entry name" value="Nucleic acid-binding proteins"/>
    <property type="match status" value="1"/>
</dbReference>
<dbReference type="HAMAP" id="MF_01595">
    <property type="entry name" value="PNPase"/>
    <property type="match status" value="1"/>
</dbReference>
<dbReference type="InterPro" id="IPR001247">
    <property type="entry name" value="ExoRNase_PH_dom1"/>
</dbReference>
<dbReference type="InterPro" id="IPR015847">
    <property type="entry name" value="ExoRNase_PH_dom2"/>
</dbReference>
<dbReference type="InterPro" id="IPR036345">
    <property type="entry name" value="ExoRNase_PH_dom2_sf"/>
</dbReference>
<dbReference type="InterPro" id="IPR004087">
    <property type="entry name" value="KH_dom"/>
</dbReference>
<dbReference type="InterPro" id="IPR004088">
    <property type="entry name" value="KH_dom_type_1"/>
</dbReference>
<dbReference type="InterPro" id="IPR036612">
    <property type="entry name" value="KH_dom_type_1_sf"/>
</dbReference>
<dbReference type="InterPro" id="IPR012340">
    <property type="entry name" value="NA-bd_OB-fold"/>
</dbReference>
<dbReference type="InterPro" id="IPR012162">
    <property type="entry name" value="PNPase"/>
</dbReference>
<dbReference type="InterPro" id="IPR027408">
    <property type="entry name" value="PNPase/RNase_PH_dom_sf"/>
</dbReference>
<dbReference type="InterPro" id="IPR015848">
    <property type="entry name" value="PNPase_PH_RNA-bd_bac/org-type"/>
</dbReference>
<dbReference type="InterPro" id="IPR036456">
    <property type="entry name" value="PNPase_PH_RNA-bd_sf"/>
</dbReference>
<dbReference type="InterPro" id="IPR020568">
    <property type="entry name" value="Ribosomal_Su5_D2-typ_SF"/>
</dbReference>
<dbReference type="InterPro" id="IPR003029">
    <property type="entry name" value="S1_domain"/>
</dbReference>
<dbReference type="NCBIfam" id="TIGR03591">
    <property type="entry name" value="polynuc_phos"/>
    <property type="match status" value="1"/>
</dbReference>
<dbReference type="NCBIfam" id="NF008805">
    <property type="entry name" value="PRK11824.1"/>
    <property type="match status" value="1"/>
</dbReference>
<dbReference type="PANTHER" id="PTHR11252">
    <property type="entry name" value="POLYRIBONUCLEOTIDE NUCLEOTIDYLTRANSFERASE"/>
    <property type="match status" value="1"/>
</dbReference>
<dbReference type="PANTHER" id="PTHR11252:SF0">
    <property type="entry name" value="POLYRIBONUCLEOTIDE NUCLEOTIDYLTRANSFERASE 1, MITOCHONDRIAL"/>
    <property type="match status" value="1"/>
</dbReference>
<dbReference type="Pfam" id="PF00013">
    <property type="entry name" value="KH_1"/>
    <property type="match status" value="1"/>
</dbReference>
<dbReference type="Pfam" id="PF03726">
    <property type="entry name" value="PNPase"/>
    <property type="match status" value="1"/>
</dbReference>
<dbReference type="Pfam" id="PF01138">
    <property type="entry name" value="RNase_PH"/>
    <property type="match status" value="2"/>
</dbReference>
<dbReference type="Pfam" id="PF03725">
    <property type="entry name" value="RNase_PH_C"/>
    <property type="match status" value="1"/>
</dbReference>
<dbReference type="Pfam" id="PF00575">
    <property type="entry name" value="S1"/>
    <property type="match status" value="1"/>
</dbReference>
<dbReference type="PIRSF" id="PIRSF005499">
    <property type="entry name" value="PNPase"/>
    <property type="match status" value="1"/>
</dbReference>
<dbReference type="SMART" id="SM00322">
    <property type="entry name" value="KH"/>
    <property type="match status" value="1"/>
</dbReference>
<dbReference type="SMART" id="SM00316">
    <property type="entry name" value="S1"/>
    <property type="match status" value="1"/>
</dbReference>
<dbReference type="SUPFAM" id="SSF54791">
    <property type="entry name" value="Eukaryotic type KH-domain (KH-domain type I)"/>
    <property type="match status" value="1"/>
</dbReference>
<dbReference type="SUPFAM" id="SSF50249">
    <property type="entry name" value="Nucleic acid-binding proteins"/>
    <property type="match status" value="1"/>
</dbReference>
<dbReference type="SUPFAM" id="SSF46915">
    <property type="entry name" value="Polynucleotide phosphorylase/guanosine pentaphosphate synthase (PNPase/GPSI), domain 3"/>
    <property type="match status" value="1"/>
</dbReference>
<dbReference type="SUPFAM" id="SSF55666">
    <property type="entry name" value="Ribonuclease PH domain 2-like"/>
    <property type="match status" value="2"/>
</dbReference>
<dbReference type="SUPFAM" id="SSF54211">
    <property type="entry name" value="Ribosomal protein S5 domain 2-like"/>
    <property type="match status" value="2"/>
</dbReference>
<dbReference type="PROSITE" id="PS50084">
    <property type="entry name" value="KH_TYPE_1"/>
    <property type="match status" value="1"/>
</dbReference>
<dbReference type="PROSITE" id="PS50126">
    <property type="entry name" value="S1"/>
    <property type="match status" value="1"/>
</dbReference>
<sequence>MNQKYSVTVPELGITFSTGSIAQLANGAVNVQVGETNVFVTACVAQTTKPGQDWFPLTVDYREKYAAAGRFPGGYFKREGRPSEKEILTSRLCDRPCRPLFPEGFLNEVQIIGQLFSADLVNESDISMVNGASAALAISDIPWNGPIAAVRVAEIEGKFVANPTIDQMFASSLDLIYVGNEKDMLMIEGSADQIPEERFIEALAFGHESIQPILKAIKELVAQCGKPKGTFPLVGATPEARTIIERVVPTERLIEAIFGKEKAVRANAVKLLKEEAKAALTAELGEGKFTDVDLNVVFEDLQYKAYRKTVLERGVRADGRGQKDIRPLQAQVGVLPRVHGSAMFQRGDTQNIALTTLGPTKDAQDLDALTGGVKSKSFLLHYNFPPFSVGETGRFTGPGRREIGHGALAERSLVPVLPPEDVFPYSIRVVSEIMASNGSTSMASICGGCLSLMDAGVPIIAPVAGISCGLMTQNASDGSIEKWVTITDILGEEDHFGDMDFKLAGTSKGITGFQLDLKINGLPFEIAKTAIMQARDARMEILKVMLGSLPAPRADLSKYAPRIQTIQIDPEKIGLLIGPGGKTIRRITETTGAQIDIAEDDSGKVFVYSNNAEAMNRAIQEIDSLCGGGGPGGSKGPAIEVGKIYTGRVTGVKEFGCFVECTPGNEGLCHVSELADFRVRRTEDVVKMGDSITVKCIGIDERSGKVRLSRKAAMKELEAQKQSSEAAPAQ</sequence>
<accession>B1ZS98</accession>
<comment type="function">
    <text evidence="1">Involved in mRNA degradation. Catalyzes the phosphorolysis of single-stranded polyribonucleotides processively in the 3'- to 5'-direction.</text>
</comment>
<comment type="catalytic activity">
    <reaction evidence="1">
        <text>RNA(n+1) + phosphate = RNA(n) + a ribonucleoside 5'-diphosphate</text>
        <dbReference type="Rhea" id="RHEA:22096"/>
        <dbReference type="Rhea" id="RHEA-COMP:14527"/>
        <dbReference type="Rhea" id="RHEA-COMP:17342"/>
        <dbReference type="ChEBI" id="CHEBI:43474"/>
        <dbReference type="ChEBI" id="CHEBI:57930"/>
        <dbReference type="ChEBI" id="CHEBI:140395"/>
        <dbReference type="EC" id="2.7.7.8"/>
    </reaction>
</comment>
<comment type="cofactor">
    <cofactor evidence="1">
        <name>Mg(2+)</name>
        <dbReference type="ChEBI" id="CHEBI:18420"/>
    </cofactor>
</comment>
<comment type="subcellular location">
    <subcellularLocation>
        <location evidence="1">Cytoplasm</location>
    </subcellularLocation>
</comment>
<comment type="similarity">
    <text evidence="1">Belongs to the polyribonucleotide nucleotidyltransferase family.</text>
</comment>
<proteinExistence type="inferred from homology"/>
<protein>
    <recommendedName>
        <fullName evidence="1">Polyribonucleotide nucleotidyltransferase</fullName>
        <ecNumber evidence="1">2.7.7.8</ecNumber>
    </recommendedName>
    <alternativeName>
        <fullName evidence="1">Polynucleotide phosphorylase</fullName>
        <shortName evidence="1">PNPase</shortName>
    </alternativeName>
</protein>